<organism>
    <name type="scientific">Enterobacteria phage M13</name>
    <name type="common">Bacteriophage M13</name>
    <dbReference type="NCBI Taxonomy" id="1977402"/>
    <lineage>
        <taxon>Viruses</taxon>
        <taxon>Monodnaviria</taxon>
        <taxon>Loebvirae</taxon>
        <taxon>Hofneiviricota</taxon>
        <taxon>Faserviricetes</taxon>
        <taxon>Tubulavirales</taxon>
        <taxon>Inoviridae</taxon>
        <taxon>Inovirus</taxon>
    </lineage>
</organism>
<accession>P69168</accession>
<accession>P03662</accession>
<reference key="1">
    <citation type="journal article" date="1980" name="Gene">
        <title>Nucleotide sequence of the filamentous bacteriophage M13 DNA genome: comparison with phage fd.</title>
        <authorList>
            <person name="van Wezenbeek P.M.G.F."/>
            <person name="Hulsebos T.J.M."/>
            <person name="Schoenmakers J.G.G."/>
        </authorList>
    </citation>
    <scope>NUCLEOTIDE SEQUENCE [GENOMIC DNA]</scope>
</reference>
<reference key="2">
    <citation type="journal article" date="1994" name="Res. Microbiol.">
        <title>The role of the adsorption complex in the termination of filamentous phage assembly.</title>
        <authorList>
            <person name="Gailus V."/>
            <person name="Ramsperger U."/>
            <person name="Johner C."/>
            <person name="Kramer H."/>
            <person name="Rasched I."/>
        </authorList>
    </citation>
    <scope>INTERACTION WITH PROTEIN G6P</scope>
</reference>
<reference key="3">
    <citation type="journal article" date="1998" name="Nat. Struct. Biol.">
        <title>The structural basis of phage display elucidated by the crystal structure of the N-terminal domains of g3p.</title>
        <authorList>
            <person name="Lubkowski J."/>
            <person name="Hennecke F."/>
            <person name="Plueckthun A."/>
            <person name="Wlodawer A."/>
        </authorList>
    </citation>
    <scope>X-RAY CRYSTALLOGRAPHY (1.46 ANGSTROMS) OF 19-235</scope>
</reference>
<reference key="4">
    <citation type="journal article" date="1999" name="Structure">
        <title>Filamentous phage infection: crystal structure of g3p in complex with its coreceptor, the C-terminal domain of TolA.</title>
        <authorList>
            <person name="Lubkowski J."/>
            <person name="Hennecke F."/>
            <person name="Plueckthun A."/>
            <person name="Wlodawer A."/>
        </authorList>
    </citation>
    <scope>X-RAY CRYSTALLOGRAPHY (1.85 ANGSTROMS) OF 19-105 IN COMPLEX WITH TOLA</scope>
    <scope>INTERACTION WITH HOST TOLA</scope>
</reference>
<dbReference type="EMBL" id="V00604">
    <property type="protein sequence ID" value="CAA23862.1"/>
    <property type="molecule type" value="Genomic_DNA"/>
</dbReference>
<dbReference type="PIR" id="C04266">
    <property type="entry name" value="Z3BPM3"/>
</dbReference>
<dbReference type="RefSeq" id="NP_510891.1">
    <property type="nucleotide sequence ID" value="NC_003287.2"/>
</dbReference>
<dbReference type="PDB" id="1G3P">
    <property type="method" value="X-ray"/>
    <property type="resolution" value="1.46 A"/>
    <property type="chains" value="A=19-235"/>
</dbReference>
<dbReference type="PDB" id="1TOL">
    <property type="method" value="X-ray"/>
    <property type="resolution" value="1.85 A"/>
    <property type="chains" value="A=19-104"/>
</dbReference>
<dbReference type="PDB" id="8IXK">
    <property type="method" value="EM"/>
    <property type="resolution" value="3.30 A"/>
    <property type="chains" value="A/F/K/R/T=19-424"/>
</dbReference>
<dbReference type="PDB" id="8JWX">
    <property type="method" value="EM"/>
    <property type="resolution" value="3.30 A"/>
    <property type="chains" value="A/F/K/R/T=19-424"/>
</dbReference>
<dbReference type="PDBsum" id="1G3P"/>
<dbReference type="PDBsum" id="1TOL"/>
<dbReference type="PDBsum" id="8IXK"/>
<dbReference type="PDBsum" id="8JWX"/>
<dbReference type="EMDB" id="EMD-35794"/>
<dbReference type="SMR" id="P69168"/>
<dbReference type="GeneID" id="927334"/>
<dbReference type="KEGG" id="vg:927334"/>
<dbReference type="OrthoDB" id="35339at10239"/>
<dbReference type="EvolutionaryTrace" id="P69168"/>
<dbReference type="Proteomes" id="UP000002111">
    <property type="component" value="Genome"/>
</dbReference>
<dbReference type="GO" id="GO:0033644">
    <property type="term" value="C:host cell membrane"/>
    <property type="evidence" value="ECO:0007669"/>
    <property type="project" value="UniProtKB-SubCell"/>
</dbReference>
<dbReference type="GO" id="GO:0016020">
    <property type="term" value="C:membrane"/>
    <property type="evidence" value="ECO:0007669"/>
    <property type="project" value="UniProtKB-KW"/>
</dbReference>
<dbReference type="GO" id="GO:0019028">
    <property type="term" value="C:viral capsid"/>
    <property type="evidence" value="ECO:0007669"/>
    <property type="project" value="UniProtKB-KW"/>
</dbReference>
<dbReference type="GO" id="GO:0098671">
    <property type="term" value="P:adhesion receptor-mediated virion attachment to host cell"/>
    <property type="evidence" value="ECO:0007669"/>
    <property type="project" value="UniProtKB-KW"/>
</dbReference>
<dbReference type="GO" id="GO:0098670">
    <property type="term" value="P:entry receptor-mediated virion attachment to host cell"/>
    <property type="evidence" value="ECO:0007669"/>
    <property type="project" value="UniProtKB-KW"/>
</dbReference>
<dbReference type="GO" id="GO:0099045">
    <property type="term" value="P:viral extrusion"/>
    <property type="evidence" value="ECO:0007669"/>
    <property type="project" value="UniProtKB-KW"/>
</dbReference>
<dbReference type="GO" id="GO:0039666">
    <property type="term" value="P:virion attachment to host cell pilus"/>
    <property type="evidence" value="ECO:0007669"/>
    <property type="project" value="UniProtKB-KW"/>
</dbReference>
<dbReference type="FunFam" id="3.90.450.1:FF:000001">
    <property type="entry name" value="Attachment protein G3P"/>
    <property type="match status" value="1"/>
</dbReference>
<dbReference type="Gene3D" id="3.90.450.1">
    <property type="entry name" value="Minor Coat Protein, Domain 2"/>
    <property type="match status" value="1"/>
</dbReference>
<dbReference type="Gene3D" id="2.30.27.10">
    <property type="entry name" value="Phage FD Coat Protein,Membrane penetration domain"/>
    <property type="match status" value="1"/>
</dbReference>
<dbReference type="InterPro" id="IPR008021">
    <property type="entry name" value="Attachment_G3P_N"/>
</dbReference>
<dbReference type="InterPro" id="IPR036200">
    <property type="entry name" value="Attachment_G3P_N_sf"/>
</dbReference>
<dbReference type="InterPro" id="IPR013834">
    <property type="entry name" value="Phage_G3P_N2_sf"/>
</dbReference>
<dbReference type="Pfam" id="PF05357">
    <property type="entry name" value="Phage_Coat_A"/>
    <property type="match status" value="2"/>
</dbReference>
<dbReference type="SUPFAM" id="SSF50176">
    <property type="entry name" value="N-terminal domains of the minor coat protein g3p"/>
    <property type="match status" value="2"/>
</dbReference>
<evidence type="ECO:0000250" key="1">
    <source>
        <dbReference type="UniProtKB" id="P03661"/>
    </source>
</evidence>
<evidence type="ECO:0000255" key="2"/>
<evidence type="ECO:0000256" key="3">
    <source>
        <dbReference type="SAM" id="MobiDB-lite"/>
    </source>
</evidence>
<evidence type="ECO:0000269" key="4">
    <source>
    </source>
</evidence>
<evidence type="ECO:0000269" key="5">
    <source>
    </source>
</evidence>
<evidence type="ECO:0000269" key="6">
    <source>
    </source>
</evidence>
<evidence type="ECO:0000305" key="7"/>
<evidence type="ECO:0000305" key="8">
    <source>
    </source>
</evidence>
<evidence type="ECO:0007829" key="9">
    <source>
        <dbReference type="PDB" id="1G3P"/>
    </source>
</evidence>
<evidence type="ECO:0007829" key="10">
    <source>
        <dbReference type="PDB" id="8IXK"/>
    </source>
</evidence>
<organismHost>
    <name type="scientific">Escherichia coli</name>
    <dbReference type="NCBI Taxonomy" id="562"/>
</organismHost>
<feature type="signal peptide" evidence="1">
    <location>
        <begin position="1"/>
        <end position="18"/>
    </location>
</feature>
<feature type="chain" id="PRO_0000003293" description="Attachment protein G3P">
    <location>
        <begin position="19"/>
        <end position="424"/>
    </location>
</feature>
<feature type="transmembrane region" description="Helical" evidence="2">
    <location>
        <begin position="398"/>
        <end position="418"/>
    </location>
</feature>
<feature type="region of interest" description="N1">
    <location>
        <begin position="19"/>
        <end position="85"/>
    </location>
</feature>
<feature type="region of interest" description="Disordered" evidence="3">
    <location>
        <begin position="83"/>
        <end position="147"/>
    </location>
</feature>
<feature type="region of interest" description="G1 (Gly-rich linker)">
    <location>
        <begin position="86"/>
        <end position="104"/>
    </location>
</feature>
<feature type="region of interest" description="Hinge" evidence="1">
    <location>
        <begin position="105"/>
        <end position="141"/>
    </location>
</feature>
<feature type="region of interest" description="N2" evidence="1">
    <location>
        <begin position="142"/>
        <end position="228"/>
    </location>
</feature>
<feature type="region of interest" description="Disordered" evidence="3">
    <location>
        <begin position="222"/>
        <end position="279"/>
    </location>
</feature>
<feature type="region of interest" description="G2 (Gly-rich linker)">
    <location>
        <begin position="236"/>
        <end position="274"/>
    </location>
</feature>
<feature type="region of interest" description="Not essential for gene 3 function">
    <location>
        <begin position="253"/>
        <end position="262"/>
    </location>
</feature>
<feature type="region of interest" description="CT">
    <location>
        <begin position="275"/>
        <end position="424"/>
    </location>
</feature>
<feature type="compositionally biased region" description="Gly residues" evidence="3">
    <location>
        <begin position="86"/>
        <end position="105"/>
    </location>
</feature>
<feature type="compositionally biased region" description="Polar residues" evidence="3">
    <location>
        <begin position="132"/>
        <end position="147"/>
    </location>
</feature>
<feature type="compositionally biased region" description="Gly residues" evidence="3">
    <location>
        <begin position="235"/>
        <end position="273"/>
    </location>
</feature>
<feature type="disulfide bond" evidence="1">
    <location>
        <begin position="25"/>
        <end position="54"/>
    </location>
</feature>
<feature type="disulfide bond" evidence="1">
    <location>
        <begin position="64"/>
        <end position="71"/>
    </location>
</feature>
<feature type="disulfide bond" evidence="1">
    <location>
        <begin position="206"/>
        <end position="219"/>
    </location>
</feature>
<feature type="helix" evidence="9">
    <location>
        <begin position="22"/>
        <end position="26"/>
    </location>
</feature>
<feature type="strand" evidence="9">
    <location>
        <begin position="31"/>
        <end position="37"/>
    </location>
</feature>
<feature type="turn" evidence="9">
    <location>
        <begin position="42"/>
        <end position="44"/>
    </location>
</feature>
<feature type="strand" evidence="9">
    <location>
        <begin position="47"/>
        <end position="51"/>
    </location>
</feature>
<feature type="strand" evidence="9">
    <location>
        <begin position="54"/>
        <end position="64"/>
    </location>
</feature>
<feature type="strand" evidence="9">
    <location>
        <begin position="68"/>
        <end position="80"/>
    </location>
</feature>
<feature type="strand" evidence="9">
    <location>
        <begin position="115"/>
        <end position="119"/>
    </location>
</feature>
<feature type="strand" evidence="9">
    <location>
        <begin position="125"/>
        <end position="128"/>
    </location>
</feature>
<feature type="strand" evidence="9">
    <location>
        <begin position="130"/>
        <end position="135"/>
    </location>
</feature>
<feature type="strand" evidence="9">
    <location>
        <begin position="142"/>
        <end position="146"/>
    </location>
</feature>
<feature type="strand" evidence="9">
    <location>
        <begin position="152"/>
        <end position="154"/>
    </location>
</feature>
<feature type="strand" evidence="9">
    <location>
        <begin position="157"/>
        <end position="162"/>
    </location>
</feature>
<feature type="strand" evidence="9">
    <location>
        <begin position="165"/>
        <end position="175"/>
    </location>
</feature>
<feature type="strand" evidence="9">
    <location>
        <begin position="181"/>
        <end position="188"/>
    </location>
</feature>
<feature type="helix" evidence="9">
    <location>
        <begin position="192"/>
        <end position="199"/>
    </location>
</feature>
<feature type="turn" evidence="9">
    <location>
        <begin position="200"/>
        <end position="206"/>
    </location>
</feature>
<feature type="strand" evidence="9">
    <location>
        <begin position="223"/>
        <end position="228"/>
    </location>
</feature>
<feature type="helix" evidence="10">
    <location>
        <begin position="281"/>
        <end position="288"/>
    </location>
</feature>
<feature type="helix" evidence="10">
    <location>
        <begin position="295"/>
        <end position="329"/>
    </location>
</feature>
<feature type="helix" evidence="10">
    <location>
        <begin position="336"/>
        <end position="340"/>
    </location>
</feature>
<feature type="helix" evidence="10">
    <location>
        <begin position="341"/>
        <end position="347"/>
    </location>
</feature>
<feature type="turn" evidence="10">
    <location>
        <begin position="354"/>
        <end position="356"/>
    </location>
</feature>
<feature type="helix" evidence="10">
    <location>
        <begin position="357"/>
        <end position="362"/>
    </location>
</feature>
<feature type="strand" evidence="10">
    <location>
        <begin position="376"/>
        <end position="378"/>
    </location>
</feature>
<feature type="helix" evidence="10">
    <location>
        <begin position="390"/>
        <end position="416"/>
    </location>
</feature>
<feature type="turn" evidence="10">
    <location>
        <begin position="417"/>
        <end position="421"/>
    </location>
</feature>
<name>G3P_BPM13</name>
<comment type="function">
    <text evidence="1">Plays essential roles both in the penetration of the viral genome into the bacterial host via pilus retraction and in the extrusion process. During the initial step of infection, G3P mediates adsorption of the phage to its primary receptor, the tip of host F-pilus. Attachment of the phage causes pilus retraction bringing the viral particle into close proximity of the host cell inner membrane. Binding to the host pilus initiates a change in the G3P conformation, allowing subsequent interaction with the host entry receptors TolA, TolQ and TolR and penetration of the viral DNA into the host cytoplasm. In the extrusion process, G3P mediates the release of the membrane-anchored virion from the cell via its C-terminal domain.</text>
</comment>
<comment type="subunit">
    <text evidence="1 4 5">Interacts with G6P; this interaction is required for proper integration of G3P and G6P into the virion (PubMed:7746960). Interacts with G8P. Interacts with the tip of the host pilus. Interacts (via N-terminus) with host TolA (PubMed:10404600). Interacts (via transmembrane domain) with host TolQ (via 2nd and 3rd transmembrane domains); this interaction allows the phage translocation across the host inner membrane. Interacts (via transmembrane domain) with host TolR (via transmembrane domain); this interaction allows the phage translocation across the host inner membrane (By similarity).</text>
</comment>
<comment type="subcellular location">
    <subcellularLocation>
        <location>Virion</location>
    </subcellularLocation>
    <subcellularLocation>
        <location evidence="7">Host membrane</location>
        <topology evidence="7">Single-pass type I membrane protein</topology>
    </subcellularLocation>
    <text>Prior to assembly, G3P is found associated with the bacterial host inner membrane. There are about five copies of this protein per mature phage that are located on the head side of the filamentous virion.</text>
</comment>
<comment type="domain">
    <text evidence="1">Consists of 3 domains (N1/D1, N2/D2, and CT) separated by glycine-rich repeats and a C-terminal transmembrane segment. The N2 domain interacts with the F pilus, whereas the N1 domain forms a complex with the C-terminal domain of TolA at later stages of the infection process. The C-terminal domain is required for release of viral particles from the host bacterial membrane and proper integration of G3P and G6P proteins in the virion.</text>
</comment>
<comment type="PTM">
    <text evidence="6">In one of the crystallographic structures Trp-39 is oxidized to 1',2'-dihydro-2'-oxotryptophan.</text>
</comment>
<comment type="similarity">
    <text evidence="7">Belongs to the inovirus G3P protein family.</text>
</comment>
<comment type="caution">
    <text evidence="8">The oxidation form of Trp-39 is subject of controversy and could be the artifactual result of sample handling.</text>
</comment>
<keyword id="KW-0002">3D-structure</keyword>
<keyword id="KW-0167">Capsid protein</keyword>
<keyword id="KW-1015">Disulfide bond</keyword>
<keyword id="KW-1043">Host membrane</keyword>
<keyword id="KW-0945">Host-virus interaction</keyword>
<keyword id="KW-0472">Membrane</keyword>
<keyword id="KW-1185">Reference proteome</keyword>
<keyword id="KW-0732">Signal</keyword>
<keyword id="KW-0812">Transmembrane</keyword>
<keyword id="KW-1133">Transmembrane helix</keyword>
<keyword id="KW-1233">Viral attachment to host adhesion receptor</keyword>
<keyword id="KW-1161">Viral attachment to host cell</keyword>
<keyword id="KW-1175">Viral attachment to host cell pilus</keyword>
<keyword id="KW-1234">Viral attachment to host entry receptor</keyword>
<keyword id="KW-1249">Viral extrusion</keyword>
<keyword id="KW-1162">Viral penetration into host cytoplasm</keyword>
<keyword id="KW-1241">Viral penetration into host cytoplasm via pilus retraction</keyword>
<keyword id="KW-1188">Viral release from host cell</keyword>
<keyword id="KW-0946">Virion</keyword>
<keyword id="KW-1160">Virus entry into host cell</keyword>
<gene>
    <name type="primary">III</name>
</gene>
<protein>
    <recommendedName>
        <fullName>Attachment protein G3P</fullName>
    </recommendedName>
    <alternativeName>
        <fullName>Gene 3 protein</fullName>
        <shortName>G3P</shortName>
    </alternativeName>
    <alternativeName>
        <fullName>Minor coat protein</fullName>
    </alternativeName>
</protein>
<proteinExistence type="evidence at protein level"/>
<sequence>MKKLLFAIPLVVPFYSHSAETVESCLAKPHTENSFTNVWKDDKTLDRYANYEGCLWNATGVVVCTGDETQCYGTWVPIGLAIPENEGGGSEGGGSEGGGSEGGGTKPPEYGDTPIPGYTYINPLDGTYPPGTEQNPANPNPSLEESQPLNTFMFQNNRFRNRQGALTVYTGTVTQGTDPVKTYYQYTPVSSKAMYDAYWNGKFRDCAFHSGFNEDPFVCEYQGQSSDLPQPPVNAGGGSGGGSGGGSEGGGSEGGGSEGGGSEGGGSGGGSGSGDFDYEKMANANKGAMTENADENALQSDAKGKLDSVATDYGAAIDGFIGDVSGLANGNGATGDFAGSNSQMAQVGDGDNSPLMNNFRQYLPSLPQSVECRPFVFSAGKPYEFSIDCDKINLFRGVFAFLLYVATFMYVFSTFANILRNKES</sequence>